<keyword id="KW-0131">Cell cycle</keyword>
<keyword id="KW-0132">Cell division</keyword>
<keyword id="KW-0133">Cell shape</keyword>
<keyword id="KW-0961">Cell wall biogenesis/degradation</keyword>
<keyword id="KW-0963">Cytoplasm</keyword>
<keyword id="KW-0573">Peptidoglycan synthesis</keyword>
<keyword id="KW-0670">Pyruvate</keyword>
<keyword id="KW-1185">Reference proteome</keyword>
<keyword id="KW-0808">Transferase</keyword>
<organism>
    <name type="scientific">Hahella chejuensis (strain KCTC 2396)</name>
    <dbReference type="NCBI Taxonomy" id="349521"/>
    <lineage>
        <taxon>Bacteria</taxon>
        <taxon>Pseudomonadati</taxon>
        <taxon>Pseudomonadota</taxon>
        <taxon>Gammaproteobacteria</taxon>
        <taxon>Oceanospirillales</taxon>
        <taxon>Hahellaceae</taxon>
        <taxon>Hahella</taxon>
    </lineage>
</organism>
<comment type="function">
    <text evidence="1">Cell wall formation. Adds enolpyruvyl to UDP-N-acetylglucosamine.</text>
</comment>
<comment type="catalytic activity">
    <reaction evidence="1">
        <text>phosphoenolpyruvate + UDP-N-acetyl-alpha-D-glucosamine = UDP-N-acetyl-3-O-(1-carboxyvinyl)-alpha-D-glucosamine + phosphate</text>
        <dbReference type="Rhea" id="RHEA:18681"/>
        <dbReference type="ChEBI" id="CHEBI:43474"/>
        <dbReference type="ChEBI" id="CHEBI:57705"/>
        <dbReference type="ChEBI" id="CHEBI:58702"/>
        <dbReference type="ChEBI" id="CHEBI:68483"/>
        <dbReference type="EC" id="2.5.1.7"/>
    </reaction>
</comment>
<comment type="pathway">
    <text evidence="1">Cell wall biogenesis; peptidoglycan biosynthesis.</text>
</comment>
<comment type="subcellular location">
    <subcellularLocation>
        <location evidence="1">Cytoplasm</location>
    </subcellularLocation>
</comment>
<comment type="similarity">
    <text evidence="1">Belongs to the EPSP synthase family. MurA subfamily.</text>
</comment>
<evidence type="ECO:0000255" key="1">
    <source>
        <dbReference type="HAMAP-Rule" id="MF_00111"/>
    </source>
</evidence>
<sequence length="420" mass="45005">MDKLLIGGSKPLNGEIRISGAKNSALPILAATLLADEPVTIGNLPHLNDITTMIELLGRMGVELMIDEKMCVEVHANTIKHLTAPYELVKTMRASILVLGPMLAHFGEAEVSLPGGCAIGSRPVDLHIRGLEAMGADILVEGGYIKAKVNGRLKGAHIYMDTVTVTGTENLLMAATLADGKTVIENAAREPEVIDLAECLIAMGADIRGHGSSTIEINGVPRLHGCRYNVLPDRVETGTYLVAAAATRGRVRVKDTREDILEAVLLKLDEAGAHISTGPDWIELDMKGARPKAVSLRTAPYPAFPTDMQAQFVAMNTVAEGTGAIVETVFENRFMHVQELRRMGAKIKLEGNTAIVEGVESLTGAPVMATDLRASASLVIAGLVAEGDTLVDRIYHIDRGYECIEEKMQLLGAKIRRLPG</sequence>
<protein>
    <recommendedName>
        <fullName evidence="1">UDP-N-acetylglucosamine 1-carboxyvinyltransferase</fullName>
        <ecNumber evidence="1">2.5.1.7</ecNumber>
    </recommendedName>
    <alternativeName>
        <fullName evidence="1">Enoylpyruvate transferase</fullName>
    </alternativeName>
    <alternativeName>
        <fullName evidence="1">UDP-N-acetylglucosamine enolpyruvyl transferase</fullName>
        <shortName evidence="1">EPT</shortName>
    </alternativeName>
</protein>
<feature type="chain" id="PRO_1000023041" description="UDP-N-acetylglucosamine 1-carboxyvinyltransferase">
    <location>
        <begin position="1"/>
        <end position="420"/>
    </location>
</feature>
<feature type="active site" description="Proton donor" evidence="1">
    <location>
        <position position="117"/>
    </location>
</feature>
<feature type="binding site" evidence="1">
    <location>
        <begin position="22"/>
        <end position="23"/>
    </location>
    <ligand>
        <name>phosphoenolpyruvate</name>
        <dbReference type="ChEBI" id="CHEBI:58702"/>
    </ligand>
</feature>
<feature type="binding site" evidence="1">
    <location>
        <position position="93"/>
    </location>
    <ligand>
        <name>UDP-N-acetyl-alpha-D-glucosamine</name>
        <dbReference type="ChEBI" id="CHEBI:57705"/>
    </ligand>
</feature>
<feature type="binding site" evidence="1">
    <location>
        <begin position="122"/>
        <end position="126"/>
    </location>
    <ligand>
        <name>UDP-N-acetyl-alpha-D-glucosamine</name>
        <dbReference type="ChEBI" id="CHEBI:57705"/>
    </ligand>
</feature>
<feature type="binding site" evidence="1">
    <location>
        <position position="307"/>
    </location>
    <ligand>
        <name>UDP-N-acetyl-alpha-D-glucosamine</name>
        <dbReference type="ChEBI" id="CHEBI:57705"/>
    </ligand>
</feature>
<feature type="binding site" evidence="1">
    <location>
        <position position="329"/>
    </location>
    <ligand>
        <name>UDP-N-acetyl-alpha-D-glucosamine</name>
        <dbReference type="ChEBI" id="CHEBI:57705"/>
    </ligand>
</feature>
<feature type="modified residue" description="2-(S-cysteinyl)pyruvic acid O-phosphothioketal" evidence="1">
    <location>
        <position position="117"/>
    </location>
</feature>
<proteinExistence type="inferred from homology"/>
<dbReference type="EC" id="2.5.1.7" evidence="1"/>
<dbReference type="EMBL" id="CP000155">
    <property type="protein sequence ID" value="ABC31980.1"/>
    <property type="molecule type" value="Genomic_DNA"/>
</dbReference>
<dbReference type="RefSeq" id="WP_011399044.1">
    <property type="nucleotide sequence ID" value="NC_007645.1"/>
</dbReference>
<dbReference type="SMR" id="Q2SBJ4"/>
<dbReference type="STRING" id="349521.HCH_05307"/>
<dbReference type="KEGG" id="hch:HCH_05307"/>
<dbReference type="eggNOG" id="COG0766">
    <property type="taxonomic scope" value="Bacteria"/>
</dbReference>
<dbReference type="HOGENOM" id="CLU_027387_0_0_6"/>
<dbReference type="OrthoDB" id="9803760at2"/>
<dbReference type="UniPathway" id="UPA00219"/>
<dbReference type="Proteomes" id="UP000000238">
    <property type="component" value="Chromosome"/>
</dbReference>
<dbReference type="GO" id="GO:0005737">
    <property type="term" value="C:cytoplasm"/>
    <property type="evidence" value="ECO:0007669"/>
    <property type="project" value="UniProtKB-SubCell"/>
</dbReference>
<dbReference type="GO" id="GO:0008760">
    <property type="term" value="F:UDP-N-acetylglucosamine 1-carboxyvinyltransferase activity"/>
    <property type="evidence" value="ECO:0007669"/>
    <property type="project" value="UniProtKB-UniRule"/>
</dbReference>
<dbReference type="GO" id="GO:0051301">
    <property type="term" value="P:cell division"/>
    <property type="evidence" value="ECO:0007669"/>
    <property type="project" value="UniProtKB-KW"/>
</dbReference>
<dbReference type="GO" id="GO:0071555">
    <property type="term" value="P:cell wall organization"/>
    <property type="evidence" value="ECO:0007669"/>
    <property type="project" value="UniProtKB-KW"/>
</dbReference>
<dbReference type="GO" id="GO:0009252">
    <property type="term" value="P:peptidoglycan biosynthetic process"/>
    <property type="evidence" value="ECO:0007669"/>
    <property type="project" value="UniProtKB-UniRule"/>
</dbReference>
<dbReference type="GO" id="GO:0008360">
    <property type="term" value="P:regulation of cell shape"/>
    <property type="evidence" value="ECO:0007669"/>
    <property type="project" value="UniProtKB-KW"/>
</dbReference>
<dbReference type="GO" id="GO:0019277">
    <property type="term" value="P:UDP-N-acetylgalactosamine biosynthetic process"/>
    <property type="evidence" value="ECO:0007669"/>
    <property type="project" value="InterPro"/>
</dbReference>
<dbReference type="CDD" id="cd01555">
    <property type="entry name" value="UdpNAET"/>
    <property type="match status" value="1"/>
</dbReference>
<dbReference type="FunFam" id="3.65.10.10:FF:000002">
    <property type="entry name" value="UDP-N-acetylglucosamine 1-carboxyvinyltransferase"/>
    <property type="match status" value="1"/>
</dbReference>
<dbReference type="Gene3D" id="3.65.10.10">
    <property type="entry name" value="Enolpyruvate transferase domain"/>
    <property type="match status" value="2"/>
</dbReference>
<dbReference type="HAMAP" id="MF_00111">
    <property type="entry name" value="MurA"/>
    <property type="match status" value="1"/>
</dbReference>
<dbReference type="InterPro" id="IPR001986">
    <property type="entry name" value="Enolpyruvate_Tfrase_dom"/>
</dbReference>
<dbReference type="InterPro" id="IPR036968">
    <property type="entry name" value="Enolpyruvate_Tfrase_sf"/>
</dbReference>
<dbReference type="InterPro" id="IPR050068">
    <property type="entry name" value="MurA_subfamily"/>
</dbReference>
<dbReference type="InterPro" id="IPR013792">
    <property type="entry name" value="RNA3'P_cycl/enolpyr_Trfase_a/b"/>
</dbReference>
<dbReference type="InterPro" id="IPR005750">
    <property type="entry name" value="UDP_GlcNAc_COvinyl_MurA"/>
</dbReference>
<dbReference type="NCBIfam" id="TIGR01072">
    <property type="entry name" value="murA"/>
    <property type="match status" value="1"/>
</dbReference>
<dbReference type="NCBIfam" id="NF006873">
    <property type="entry name" value="PRK09369.1"/>
    <property type="match status" value="1"/>
</dbReference>
<dbReference type="PANTHER" id="PTHR43783">
    <property type="entry name" value="UDP-N-ACETYLGLUCOSAMINE 1-CARBOXYVINYLTRANSFERASE"/>
    <property type="match status" value="1"/>
</dbReference>
<dbReference type="PANTHER" id="PTHR43783:SF1">
    <property type="entry name" value="UDP-N-ACETYLGLUCOSAMINE 1-CARBOXYVINYLTRANSFERASE"/>
    <property type="match status" value="1"/>
</dbReference>
<dbReference type="Pfam" id="PF00275">
    <property type="entry name" value="EPSP_synthase"/>
    <property type="match status" value="1"/>
</dbReference>
<dbReference type="SUPFAM" id="SSF55205">
    <property type="entry name" value="EPT/RTPC-like"/>
    <property type="match status" value="1"/>
</dbReference>
<name>MURA_HAHCH</name>
<gene>
    <name evidence="1" type="primary">murA</name>
    <name type="ordered locus">HCH_05307</name>
</gene>
<accession>Q2SBJ4</accession>
<reference key="1">
    <citation type="journal article" date="2005" name="Nucleic Acids Res.">
        <title>Genomic blueprint of Hahella chejuensis, a marine microbe producing an algicidal agent.</title>
        <authorList>
            <person name="Jeong H."/>
            <person name="Yim J.H."/>
            <person name="Lee C."/>
            <person name="Choi S.-H."/>
            <person name="Park Y.K."/>
            <person name="Yoon S.H."/>
            <person name="Hur C.-G."/>
            <person name="Kang H.-Y."/>
            <person name="Kim D."/>
            <person name="Lee H.H."/>
            <person name="Park K.H."/>
            <person name="Park S.-H."/>
            <person name="Park H.-S."/>
            <person name="Lee H.K."/>
            <person name="Oh T.K."/>
            <person name="Kim J.F."/>
        </authorList>
    </citation>
    <scope>NUCLEOTIDE SEQUENCE [LARGE SCALE GENOMIC DNA]</scope>
    <source>
        <strain>KCTC 2396</strain>
    </source>
</reference>